<protein>
    <recommendedName>
        <fullName evidence="1">DNA-directed RNA polymerase subunit beta</fullName>
        <shortName evidence="1">RNAP subunit beta</shortName>
        <ecNumber evidence="1">2.7.7.6</ecNumber>
    </recommendedName>
    <alternativeName>
        <fullName evidence="1">RNA polymerase subunit beta</fullName>
    </alternativeName>
    <alternativeName>
        <fullName evidence="1">Transcriptase subunit beta</fullName>
    </alternativeName>
</protein>
<name>RPOB_PECAS</name>
<evidence type="ECO:0000255" key="1">
    <source>
        <dbReference type="HAMAP-Rule" id="MF_01321"/>
    </source>
</evidence>
<comment type="function">
    <text evidence="1">DNA-dependent RNA polymerase catalyzes the transcription of DNA into RNA using the four ribonucleoside triphosphates as substrates.</text>
</comment>
<comment type="catalytic activity">
    <reaction evidence="1">
        <text>RNA(n) + a ribonucleoside 5'-triphosphate = RNA(n+1) + diphosphate</text>
        <dbReference type="Rhea" id="RHEA:21248"/>
        <dbReference type="Rhea" id="RHEA-COMP:14527"/>
        <dbReference type="Rhea" id="RHEA-COMP:17342"/>
        <dbReference type="ChEBI" id="CHEBI:33019"/>
        <dbReference type="ChEBI" id="CHEBI:61557"/>
        <dbReference type="ChEBI" id="CHEBI:140395"/>
        <dbReference type="EC" id="2.7.7.6"/>
    </reaction>
</comment>
<comment type="subunit">
    <text evidence="1">The RNAP catalytic core consists of 2 alpha, 1 beta, 1 beta' and 1 omega subunit. When a sigma factor is associated with the core the holoenzyme is formed, which can initiate transcription.</text>
</comment>
<comment type="similarity">
    <text evidence="1">Belongs to the RNA polymerase beta chain family.</text>
</comment>
<sequence length="1342" mass="150614">MVYSYTEKKRIRKDFGKRPQVLDIPYLLSIQLDSFQKFIEQDPEGQHGLEAAFRSVFPIKSYSGNSELQYVSYRLGEPVFDVKECQIRGVTFSAPLRVKLRLVIYEREAPEGTVKDIKEQEVYMGEIPLMTDNGTFVINGTERVIVSQLHRSPGVFFDSDKGKTHSSGKVLYNARIIPYRGSWLDFEFDPKDNLFVRIDRRRKLPATIILRALGYSTAQILDLFFDKIVYEINGNKLQMDLVPERLRGETASFDIEANGKVYIEKGRRITARHIRQLEKDSIERIEVPVEYIAGKVLSKDYIDESTGELIGAANMELSLDLLAKLSQSGHKRIETLFTNDLDHGAYMSETVRVDPSSDRLSALVEIYRMMRPGEPPTREAAETLFENLFFSEDRYDLSAVGRMKFNRSLLRDEIEGSGILSKDDIIEVMKKLIDIRNGKGEVDDIDHLGNRRIRSVGEMAENQFRVGLVRVERAVKERLSLGDLDTLMPQDMINAKPISAAVKEFFGSSQLSQFMDQNNPLSEITHKRRISALGPGGLTRERAGFEVRDVHPTHYGRVCPIETPEGPNIGLINSLSVYAQTNEYGFLETPYRRVRENVVTDEIHYLSAIEEGNFVIAQANTNLDEEGRFIDELVTCRNKGESSLFSRDQVEYMDVSTQQIVSVGASLIPFLEHDDANRALMGANMQRQAVPTLRADKPLVGTGMERAVAVDSGVTAVAKRGGTVQYVDASRIVIRVNDDEMYPGEAGIDIYNLTKYTRSNQNTCISQMPCVSLGEPVERGDVLADGPSTDLGELALGQNMRVAFMPWNGYNFEDSILVSERVVQEDRFTTIHIQELACVSRDTKLGPEEITADIPNVGEAALSKLDESGIVYIGAEVTGGDILVGKVTPKGETQLTPEEKLLRAIFGEKASDVKDSSLRVPNGVSGTIIDVQVFTRDGVEKDKRALEIEEMQLKQAKKDLTEELQILEAGLFGRIHAVLVSGGVEADKLDKLPRERWLELGLTDEDKQNQLEQLAEQYDELKHEFEKKLEAKRRKITQGDDLAPGVLKIVKVYLAVKRQIQPGDKMAGRHGNKGVISKINPIEDMPYDENGTPVDIVLNPLGVPSRMNIGQILETHLGMAAKGIGEKINAMLKQHEEVTKLREFIQRAYDLGDDLRQKVDLSTFSDEEVMRLAENLKKGMPIATPVFDGAKEKEIKELLQMGGIPTSGQITLYDGRTGEQFERQVTVGYMYMLKLNHLVDDKMHARSTGSYSLVTQQPLGGKAQFGGQRFGEMEVWALEAYGAAYTLQEMLTVKSDDVNGRTKMYKNIVDGNHQMEPGMPESFNVLLKEIRSLGINIELEEK</sequence>
<dbReference type="EC" id="2.7.7.6" evidence="1"/>
<dbReference type="EMBL" id="BX950851">
    <property type="protein sequence ID" value="CAG73142.1"/>
    <property type="molecule type" value="Genomic_DNA"/>
</dbReference>
<dbReference type="RefSeq" id="WP_011091860.1">
    <property type="nucleotide sequence ID" value="NC_004547.2"/>
</dbReference>
<dbReference type="SMR" id="Q6DAN0"/>
<dbReference type="STRING" id="218491.ECA0223"/>
<dbReference type="GeneID" id="57207089"/>
<dbReference type="KEGG" id="eca:ECA0223"/>
<dbReference type="PATRIC" id="fig|218491.5.peg.223"/>
<dbReference type="eggNOG" id="COG0085">
    <property type="taxonomic scope" value="Bacteria"/>
</dbReference>
<dbReference type="HOGENOM" id="CLU_000524_4_0_6"/>
<dbReference type="OrthoDB" id="9803954at2"/>
<dbReference type="Proteomes" id="UP000007966">
    <property type="component" value="Chromosome"/>
</dbReference>
<dbReference type="GO" id="GO:0000428">
    <property type="term" value="C:DNA-directed RNA polymerase complex"/>
    <property type="evidence" value="ECO:0007669"/>
    <property type="project" value="UniProtKB-KW"/>
</dbReference>
<dbReference type="GO" id="GO:0003677">
    <property type="term" value="F:DNA binding"/>
    <property type="evidence" value="ECO:0007669"/>
    <property type="project" value="UniProtKB-UniRule"/>
</dbReference>
<dbReference type="GO" id="GO:0003899">
    <property type="term" value="F:DNA-directed RNA polymerase activity"/>
    <property type="evidence" value="ECO:0007669"/>
    <property type="project" value="UniProtKB-UniRule"/>
</dbReference>
<dbReference type="GO" id="GO:0032549">
    <property type="term" value="F:ribonucleoside binding"/>
    <property type="evidence" value="ECO:0007669"/>
    <property type="project" value="InterPro"/>
</dbReference>
<dbReference type="GO" id="GO:0006351">
    <property type="term" value="P:DNA-templated transcription"/>
    <property type="evidence" value="ECO:0007669"/>
    <property type="project" value="UniProtKB-UniRule"/>
</dbReference>
<dbReference type="CDD" id="cd00653">
    <property type="entry name" value="RNA_pol_B_RPB2"/>
    <property type="match status" value="1"/>
</dbReference>
<dbReference type="FunFam" id="2.30.150.10:FF:000001">
    <property type="entry name" value="DNA-directed RNA polymerase subunit beta"/>
    <property type="match status" value="1"/>
</dbReference>
<dbReference type="FunFam" id="2.40.270.10:FF:000003">
    <property type="entry name" value="DNA-directed RNA polymerase subunit beta"/>
    <property type="match status" value="1"/>
</dbReference>
<dbReference type="FunFam" id="2.40.270.10:FF:000004">
    <property type="entry name" value="DNA-directed RNA polymerase subunit beta"/>
    <property type="match status" value="1"/>
</dbReference>
<dbReference type="FunFam" id="2.40.50.100:FF:000006">
    <property type="entry name" value="DNA-directed RNA polymerase subunit beta"/>
    <property type="match status" value="1"/>
</dbReference>
<dbReference type="FunFam" id="2.40.50.150:FF:000001">
    <property type="entry name" value="DNA-directed RNA polymerase subunit beta"/>
    <property type="match status" value="1"/>
</dbReference>
<dbReference type="FunFam" id="3.90.1100.10:FF:000002">
    <property type="entry name" value="DNA-directed RNA polymerase subunit beta"/>
    <property type="match status" value="1"/>
</dbReference>
<dbReference type="FunFam" id="3.90.1110.10:FF:000001">
    <property type="entry name" value="DNA-directed RNA polymerase subunit beta"/>
    <property type="match status" value="1"/>
</dbReference>
<dbReference type="FunFam" id="3.90.1110.10:FF:000004">
    <property type="entry name" value="DNA-directed RNA polymerase subunit beta"/>
    <property type="match status" value="1"/>
</dbReference>
<dbReference type="FunFam" id="3.90.1800.10:FF:000001">
    <property type="entry name" value="DNA-directed RNA polymerase subunit beta"/>
    <property type="match status" value="1"/>
</dbReference>
<dbReference type="Gene3D" id="2.40.50.100">
    <property type="match status" value="1"/>
</dbReference>
<dbReference type="Gene3D" id="2.40.50.150">
    <property type="match status" value="1"/>
</dbReference>
<dbReference type="Gene3D" id="3.90.1100.10">
    <property type="match status" value="2"/>
</dbReference>
<dbReference type="Gene3D" id="6.10.140.1670">
    <property type="match status" value="1"/>
</dbReference>
<dbReference type="Gene3D" id="2.30.150.10">
    <property type="entry name" value="DNA-directed RNA polymerase, beta subunit, external 1 domain"/>
    <property type="match status" value="1"/>
</dbReference>
<dbReference type="Gene3D" id="2.40.270.10">
    <property type="entry name" value="DNA-directed RNA polymerase, subunit 2, domain 6"/>
    <property type="match status" value="1"/>
</dbReference>
<dbReference type="Gene3D" id="3.90.1800.10">
    <property type="entry name" value="RNA polymerase alpha subunit dimerisation domain"/>
    <property type="match status" value="1"/>
</dbReference>
<dbReference type="Gene3D" id="3.90.1110.10">
    <property type="entry name" value="RNA polymerase Rpb2, domain 2"/>
    <property type="match status" value="1"/>
</dbReference>
<dbReference type="HAMAP" id="MF_01321">
    <property type="entry name" value="RNApol_bact_RpoB"/>
    <property type="match status" value="1"/>
</dbReference>
<dbReference type="InterPro" id="IPR042107">
    <property type="entry name" value="DNA-dir_RNA_pol_bsu_ext_1_sf"/>
</dbReference>
<dbReference type="InterPro" id="IPR019462">
    <property type="entry name" value="DNA-dir_RNA_pol_bsu_external_1"/>
</dbReference>
<dbReference type="InterPro" id="IPR015712">
    <property type="entry name" value="DNA-dir_RNA_pol_su2"/>
</dbReference>
<dbReference type="InterPro" id="IPR007120">
    <property type="entry name" value="DNA-dir_RNAP_su2_dom"/>
</dbReference>
<dbReference type="InterPro" id="IPR037033">
    <property type="entry name" value="DNA-dir_RNAP_su2_hyb_sf"/>
</dbReference>
<dbReference type="InterPro" id="IPR010243">
    <property type="entry name" value="RNA_pol_bsu_bac"/>
</dbReference>
<dbReference type="InterPro" id="IPR007121">
    <property type="entry name" value="RNA_pol_bsu_CS"/>
</dbReference>
<dbReference type="InterPro" id="IPR007644">
    <property type="entry name" value="RNA_pol_bsu_protrusion"/>
</dbReference>
<dbReference type="InterPro" id="IPR007642">
    <property type="entry name" value="RNA_pol_Rpb2_2"/>
</dbReference>
<dbReference type="InterPro" id="IPR037034">
    <property type="entry name" value="RNA_pol_Rpb2_2_sf"/>
</dbReference>
<dbReference type="InterPro" id="IPR007645">
    <property type="entry name" value="RNA_pol_Rpb2_3"/>
</dbReference>
<dbReference type="InterPro" id="IPR007641">
    <property type="entry name" value="RNA_pol_Rpb2_7"/>
</dbReference>
<dbReference type="InterPro" id="IPR014724">
    <property type="entry name" value="RNA_pol_RPB2_OB-fold"/>
</dbReference>
<dbReference type="NCBIfam" id="NF001616">
    <property type="entry name" value="PRK00405.1"/>
    <property type="match status" value="1"/>
</dbReference>
<dbReference type="NCBIfam" id="TIGR02013">
    <property type="entry name" value="rpoB"/>
    <property type="match status" value="1"/>
</dbReference>
<dbReference type="PANTHER" id="PTHR20856">
    <property type="entry name" value="DNA-DIRECTED RNA POLYMERASE I SUBUNIT 2"/>
    <property type="match status" value="1"/>
</dbReference>
<dbReference type="Pfam" id="PF04563">
    <property type="entry name" value="RNA_pol_Rpb2_1"/>
    <property type="match status" value="1"/>
</dbReference>
<dbReference type="Pfam" id="PF04561">
    <property type="entry name" value="RNA_pol_Rpb2_2"/>
    <property type="match status" value="2"/>
</dbReference>
<dbReference type="Pfam" id="PF04565">
    <property type="entry name" value="RNA_pol_Rpb2_3"/>
    <property type="match status" value="1"/>
</dbReference>
<dbReference type="Pfam" id="PF10385">
    <property type="entry name" value="RNA_pol_Rpb2_45"/>
    <property type="match status" value="1"/>
</dbReference>
<dbReference type="Pfam" id="PF00562">
    <property type="entry name" value="RNA_pol_Rpb2_6"/>
    <property type="match status" value="1"/>
</dbReference>
<dbReference type="Pfam" id="PF04560">
    <property type="entry name" value="RNA_pol_Rpb2_7"/>
    <property type="match status" value="1"/>
</dbReference>
<dbReference type="SUPFAM" id="SSF64484">
    <property type="entry name" value="beta and beta-prime subunits of DNA dependent RNA-polymerase"/>
    <property type="match status" value="1"/>
</dbReference>
<dbReference type="PROSITE" id="PS01166">
    <property type="entry name" value="RNA_POL_BETA"/>
    <property type="match status" value="1"/>
</dbReference>
<accession>Q6DAN0</accession>
<proteinExistence type="inferred from homology"/>
<reference key="1">
    <citation type="journal article" date="2004" name="Proc. Natl. Acad. Sci. U.S.A.">
        <title>Genome sequence of the enterobacterial phytopathogen Erwinia carotovora subsp. atroseptica and characterization of virulence factors.</title>
        <authorList>
            <person name="Bell K.S."/>
            <person name="Sebaihia M."/>
            <person name="Pritchard L."/>
            <person name="Holden M.T.G."/>
            <person name="Hyman L.J."/>
            <person name="Holeva M.C."/>
            <person name="Thomson N.R."/>
            <person name="Bentley S.D."/>
            <person name="Churcher L.J.C."/>
            <person name="Mungall K."/>
            <person name="Atkin R."/>
            <person name="Bason N."/>
            <person name="Brooks K."/>
            <person name="Chillingworth T."/>
            <person name="Clark K."/>
            <person name="Doggett J."/>
            <person name="Fraser A."/>
            <person name="Hance Z."/>
            <person name="Hauser H."/>
            <person name="Jagels K."/>
            <person name="Moule S."/>
            <person name="Norbertczak H."/>
            <person name="Ormond D."/>
            <person name="Price C."/>
            <person name="Quail M.A."/>
            <person name="Sanders M."/>
            <person name="Walker D."/>
            <person name="Whitehead S."/>
            <person name="Salmond G.P.C."/>
            <person name="Birch P.R.J."/>
            <person name="Parkhill J."/>
            <person name="Toth I.K."/>
        </authorList>
    </citation>
    <scope>NUCLEOTIDE SEQUENCE [LARGE SCALE GENOMIC DNA]</scope>
    <source>
        <strain>SCRI 1043 / ATCC BAA-672</strain>
    </source>
</reference>
<feature type="chain" id="PRO_0000224057" description="DNA-directed RNA polymerase subunit beta">
    <location>
        <begin position="1"/>
        <end position="1342"/>
    </location>
</feature>
<organism>
    <name type="scientific">Pectobacterium atrosepticum (strain SCRI 1043 / ATCC BAA-672)</name>
    <name type="common">Erwinia carotovora subsp. atroseptica</name>
    <dbReference type="NCBI Taxonomy" id="218491"/>
    <lineage>
        <taxon>Bacteria</taxon>
        <taxon>Pseudomonadati</taxon>
        <taxon>Pseudomonadota</taxon>
        <taxon>Gammaproteobacteria</taxon>
        <taxon>Enterobacterales</taxon>
        <taxon>Pectobacteriaceae</taxon>
        <taxon>Pectobacterium</taxon>
    </lineage>
</organism>
<gene>
    <name evidence="1" type="primary">rpoB</name>
    <name type="ordered locus">ECA0223</name>
</gene>
<keyword id="KW-0240">DNA-directed RNA polymerase</keyword>
<keyword id="KW-0548">Nucleotidyltransferase</keyword>
<keyword id="KW-1185">Reference proteome</keyword>
<keyword id="KW-0804">Transcription</keyword>
<keyword id="KW-0808">Transferase</keyword>